<organism>
    <name type="scientific">Bacillus anthracis (strain A0248)</name>
    <dbReference type="NCBI Taxonomy" id="592021"/>
    <lineage>
        <taxon>Bacteria</taxon>
        <taxon>Bacillati</taxon>
        <taxon>Bacillota</taxon>
        <taxon>Bacilli</taxon>
        <taxon>Bacillales</taxon>
        <taxon>Bacillaceae</taxon>
        <taxon>Bacillus</taxon>
        <taxon>Bacillus cereus group</taxon>
    </lineage>
</organism>
<proteinExistence type="inferred from homology"/>
<dbReference type="EC" id="4.2.1.19" evidence="1"/>
<dbReference type="EMBL" id="CP001598">
    <property type="protein sequence ID" value="ACQ47911.1"/>
    <property type="molecule type" value="Genomic_DNA"/>
</dbReference>
<dbReference type="RefSeq" id="WP_001209295.1">
    <property type="nucleotide sequence ID" value="NC_012659.1"/>
</dbReference>
<dbReference type="SMR" id="C3P503"/>
<dbReference type="GeneID" id="45021406"/>
<dbReference type="KEGG" id="bai:BAA_1494"/>
<dbReference type="HOGENOM" id="CLU_044308_3_0_9"/>
<dbReference type="UniPathway" id="UPA00031">
    <property type="reaction ID" value="UER00011"/>
</dbReference>
<dbReference type="GO" id="GO:0005737">
    <property type="term" value="C:cytoplasm"/>
    <property type="evidence" value="ECO:0007669"/>
    <property type="project" value="UniProtKB-SubCell"/>
</dbReference>
<dbReference type="GO" id="GO:0004424">
    <property type="term" value="F:imidazoleglycerol-phosphate dehydratase activity"/>
    <property type="evidence" value="ECO:0007669"/>
    <property type="project" value="UniProtKB-UniRule"/>
</dbReference>
<dbReference type="GO" id="GO:0000105">
    <property type="term" value="P:L-histidine biosynthetic process"/>
    <property type="evidence" value="ECO:0007669"/>
    <property type="project" value="UniProtKB-UniRule"/>
</dbReference>
<dbReference type="CDD" id="cd07914">
    <property type="entry name" value="IGPD"/>
    <property type="match status" value="1"/>
</dbReference>
<dbReference type="FunFam" id="3.30.230.40:FF:000001">
    <property type="entry name" value="Imidazoleglycerol-phosphate dehydratase HisB"/>
    <property type="match status" value="1"/>
</dbReference>
<dbReference type="FunFam" id="3.30.230.40:FF:000003">
    <property type="entry name" value="Imidazoleglycerol-phosphate dehydratase HisB"/>
    <property type="match status" value="1"/>
</dbReference>
<dbReference type="Gene3D" id="3.30.230.40">
    <property type="entry name" value="Imidazole glycerol phosphate dehydratase, domain 1"/>
    <property type="match status" value="2"/>
</dbReference>
<dbReference type="HAMAP" id="MF_00076">
    <property type="entry name" value="HisB"/>
    <property type="match status" value="1"/>
</dbReference>
<dbReference type="InterPro" id="IPR038494">
    <property type="entry name" value="IGPD_sf"/>
</dbReference>
<dbReference type="InterPro" id="IPR000807">
    <property type="entry name" value="ImidazoleglycerolP_deHydtase"/>
</dbReference>
<dbReference type="InterPro" id="IPR020565">
    <property type="entry name" value="ImidazoleglycerP_deHydtase_CS"/>
</dbReference>
<dbReference type="InterPro" id="IPR020568">
    <property type="entry name" value="Ribosomal_Su5_D2-typ_SF"/>
</dbReference>
<dbReference type="NCBIfam" id="NF002107">
    <property type="entry name" value="PRK00951.1-2"/>
    <property type="match status" value="1"/>
</dbReference>
<dbReference type="NCBIfam" id="NF002111">
    <property type="entry name" value="PRK00951.2-1"/>
    <property type="match status" value="1"/>
</dbReference>
<dbReference type="NCBIfam" id="NF002114">
    <property type="entry name" value="PRK00951.2-4"/>
    <property type="match status" value="1"/>
</dbReference>
<dbReference type="PANTHER" id="PTHR23133:SF2">
    <property type="entry name" value="IMIDAZOLEGLYCEROL-PHOSPHATE DEHYDRATASE"/>
    <property type="match status" value="1"/>
</dbReference>
<dbReference type="PANTHER" id="PTHR23133">
    <property type="entry name" value="IMIDAZOLEGLYCEROL-PHOSPHATE DEHYDRATASE HIS7"/>
    <property type="match status" value="1"/>
</dbReference>
<dbReference type="Pfam" id="PF00475">
    <property type="entry name" value="IGPD"/>
    <property type="match status" value="1"/>
</dbReference>
<dbReference type="SUPFAM" id="SSF54211">
    <property type="entry name" value="Ribosomal protein S5 domain 2-like"/>
    <property type="match status" value="2"/>
</dbReference>
<dbReference type="PROSITE" id="PS00954">
    <property type="entry name" value="IGP_DEHYDRATASE_1"/>
    <property type="match status" value="1"/>
</dbReference>
<dbReference type="PROSITE" id="PS00955">
    <property type="entry name" value="IGP_DEHYDRATASE_2"/>
    <property type="match status" value="1"/>
</dbReference>
<reference key="1">
    <citation type="submission" date="2009-04" db="EMBL/GenBank/DDBJ databases">
        <title>Genome sequence of Bacillus anthracis A0248.</title>
        <authorList>
            <person name="Dodson R.J."/>
            <person name="Munk A.C."/>
            <person name="Bruce D."/>
            <person name="Detter C."/>
            <person name="Tapia R."/>
            <person name="Sutton G."/>
            <person name="Sims D."/>
            <person name="Brettin T."/>
        </authorList>
    </citation>
    <scope>NUCLEOTIDE SEQUENCE [LARGE SCALE GENOMIC DNA]</scope>
    <source>
        <strain>A0248</strain>
    </source>
</reference>
<accession>C3P503</accession>
<sequence length="194" mass="21509">MRESSQIRETTETKIKLSLQLDEGKNVSVQTGVGFFDHMLTLFARHGRFGLQVEAEGDVFVDAHHTVEDVGIVLGNCLKEALQNKEGINRYGSAYVPMDESLGFVAIDISGRSYIVFQGELTNPKLGDFDTELTEEFFRAVAHAANITLHARILYGSNTHHKIEALFKAFGRALREAVERNAHITGVNSTKGML</sequence>
<comment type="catalytic activity">
    <reaction evidence="1">
        <text>D-erythro-1-(imidazol-4-yl)glycerol 3-phosphate = 3-(imidazol-4-yl)-2-oxopropyl phosphate + H2O</text>
        <dbReference type="Rhea" id="RHEA:11040"/>
        <dbReference type="ChEBI" id="CHEBI:15377"/>
        <dbReference type="ChEBI" id="CHEBI:57766"/>
        <dbReference type="ChEBI" id="CHEBI:58278"/>
        <dbReference type="EC" id="4.2.1.19"/>
    </reaction>
</comment>
<comment type="pathway">
    <text evidence="1">Amino-acid biosynthesis; L-histidine biosynthesis; L-histidine from 5-phospho-alpha-D-ribose 1-diphosphate: step 6/9.</text>
</comment>
<comment type="subcellular location">
    <subcellularLocation>
        <location evidence="1">Cytoplasm</location>
    </subcellularLocation>
</comment>
<comment type="similarity">
    <text evidence="1">Belongs to the imidazoleglycerol-phosphate dehydratase family.</text>
</comment>
<name>HIS7_BACAA</name>
<protein>
    <recommendedName>
        <fullName evidence="1">Imidazoleglycerol-phosphate dehydratase</fullName>
        <shortName evidence="1">IGPD</shortName>
        <ecNumber evidence="1">4.2.1.19</ecNumber>
    </recommendedName>
</protein>
<evidence type="ECO:0000255" key="1">
    <source>
        <dbReference type="HAMAP-Rule" id="MF_00076"/>
    </source>
</evidence>
<feature type="chain" id="PRO_1000118212" description="Imidazoleglycerol-phosphate dehydratase">
    <location>
        <begin position="1"/>
        <end position="194"/>
    </location>
</feature>
<gene>
    <name evidence="1" type="primary">hisB</name>
    <name type="ordered locus">BAA_1494</name>
</gene>
<keyword id="KW-0028">Amino-acid biosynthesis</keyword>
<keyword id="KW-0963">Cytoplasm</keyword>
<keyword id="KW-0368">Histidine biosynthesis</keyword>
<keyword id="KW-0456">Lyase</keyword>